<evidence type="ECO:0000255" key="1">
    <source>
        <dbReference type="PROSITE-ProRule" id="PRU00175"/>
    </source>
</evidence>
<name>VCG3_NPVOP</name>
<sequence>MDTVRLQCHICCSVGEIKNYFLQPVDAITILPIVELHTCRHQLCVMCVRKIAQRGRDKRVECPMCRRKNAHFNVYSVNRNSVDVLRCSVADVREHGRFGGLADAASLARGLFEPSLLEAEPAPDNSFGPNELQLVLKRLKAQIEAQTRTNYDLQLQATALERTIEEANDRLGKSRGDYSDACKLMDELRGDRLRAERAVKALADAHAQWADKNAKMRRENDRLTNENIGLIRDNNLFKQNTARKRKIAP</sequence>
<reference key="1">
    <citation type="journal article" date="1997" name="Virology">
        <title>The sequence of the Orgyia pseudotsugata multinucleocapsid nuclear polyhedrosis virus genome.</title>
        <authorList>
            <person name="Ahrens C.H."/>
            <person name="Russell R.R."/>
            <person name="Funk C.J."/>
            <person name="Evans J."/>
            <person name="Harwood S."/>
            <person name="Rohrmann G.F."/>
        </authorList>
    </citation>
    <scope>NUCLEOTIDE SEQUENCE [LARGE SCALE GENOMIC DNA]</scope>
</reference>
<dbReference type="EMBL" id="U75930">
    <property type="protein sequence ID" value="AAC59088.1"/>
    <property type="molecule type" value="Genomic_DNA"/>
</dbReference>
<dbReference type="RefSeq" id="NP_046245.1">
    <property type="nucleotide sequence ID" value="NC_001875.2"/>
</dbReference>
<dbReference type="SMR" id="O10339"/>
<dbReference type="KEGG" id="vg:912003"/>
<dbReference type="OrthoDB" id="8894at10239"/>
<dbReference type="Proteomes" id="UP000009248">
    <property type="component" value="Genome"/>
</dbReference>
<dbReference type="GO" id="GO:0008270">
    <property type="term" value="F:zinc ion binding"/>
    <property type="evidence" value="ECO:0007669"/>
    <property type="project" value="UniProtKB-KW"/>
</dbReference>
<dbReference type="Gene3D" id="3.30.40.10">
    <property type="entry name" value="Zinc/RING finger domain, C3HC4 (zinc finger)"/>
    <property type="match status" value="1"/>
</dbReference>
<dbReference type="InterPro" id="IPR018957">
    <property type="entry name" value="Znf_C3HC4_RING-type"/>
</dbReference>
<dbReference type="InterPro" id="IPR001841">
    <property type="entry name" value="Znf_RING"/>
</dbReference>
<dbReference type="InterPro" id="IPR013083">
    <property type="entry name" value="Znf_RING/FYVE/PHD"/>
</dbReference>
<dbReference type="InterPro" id="IPR017907">
    <property type="entry name" value="Znf_RING_CS"/>
</dbReference>
<dbReference type="Pfam" id="PF00097">
    <property type="entry name" value="zf-C3HC4"/>
    <property type="match status" value="1"/>
</dbReference>
<dbReference type="SUPFAM" id="SSF57850">
    <property type="entry name" value="RING/U-box"/>
    <property type="match status" value="1"/>
</dbReference>
<dbReference type="PROSITE" id="PS00518">
    <property type="entry name" value="ZF_RING_1"/>
    <property type="match status" value="1"/>
</dbReference>
<dbReference type="PROSITE" id="PS50089">
    <property type="entry name" value="ZF_RING_2"/>
    <property type="match status" value="1"/>
</dbReference>
<accession>O10339</accession>
<protein>
    <recommendedName>
        <fullName>Zinc finger protein CG30</fullName>
    </recommendedName>
</protein>
<gene>
    <name type="primary">CG30</name>
    <name type="ORF">ORF89</name>
</gene>
<proteinExistence type="predicted"/>
<keyword id="KW-0479">Metal-binding</keyword>
<keyword id="KW-1185">Reference proteome</keyword>
<keyword id="KW-0862">Zinc</keyword>
<keyword id="KW-0863">Zinc-finger</keyword>
<organismHost>
    <name type="scientific">Orgyia pseudotsugata</name>
    <name type="common">Douglas-fir tussock moth</name>
    <dbReference type="NCBI Taxonomy" id="33414"/>
</organismHost>
<organism>
    <name type="scientific">Orgyia pseudotsugata multicapsid polyhedrosis virus</name>
    <name type="common">OpMNPV</name>
    <dbReference type="NCBI Taxonomy" id="262177"/>
    <lineage>
        <taxon>Viruses</taxon>
        <taxon>Viruses incertae sedis</taxon>
        <taxon>Naldaviricetes</taxon>
        <taxon>Lefavirales</taxon>
        <taxon>Baculoviridae</taxon>
        <taxon>Alphabaculovirus</taxon>
        <taxon>Alphabaculovirus orpseudotsugatae</taxon>
    </lineage>
</organism>
<feature type="chain" id="PRO_0000056345" description="Zinc finger protein CG30">
    <location>
        <begin position="1"/>
        <end position="249"/>
    </location>
</feature>
<feature type="zinc finger region" description="RING-type" evidence="1">
    <location>
        <begin position="8"/>
        <end position="66"/>
    </location>
</feature>